<name>TGB2_BSMV</name>
<protein>
    <recommendedName>
        <fullName>Movement protein TGB2</fullName>
    </recommendedName>
    <alternativeName>
        <fullName>14 kDa protein</fullName>
    </alternativeName>
    <alternativeName>
        <fullName>Beta-D protein</fullName>
    </alternativeName>
    <alternativeName>
        <fullName>Triple gene block 2 protein</fullName>
        <shortName>TGBp2</shortName>
    </alternativeName>
    <component>
        <recommendedName>
            <fullName>TGB2' protein</fullName>
        </recommendedName>
    </component>
</protein>
<organism>
    <name type="scientific">Barley stripe mosaic virus</name>
    <name type="common">BSMV</name>
    <dbReference type="NCBI Taxonomy" id="12327"/>
    <lineage>
        <taxon>Viruses</taxon>
        <taxon>Riboviria</taxon>
        <taxon>Orthornavirae</taxon>
        <taxon>Kitrinoviricota</taxon>
        <taxon>Alsuviricetes</taxon>
        <taxon>Martellivirales</taxon>
        <taxon>Virgaviridae</taxon>
        <taxon>Hordeivirus</taxon>
    </lineage>
</organism>
<evidence type="ECO:0000250" key="1">
    <source>
        <dbReference type="UniProtKB" id="Q9IV52"/>
    </source>
</evidence>
<evidence type="ECO:0000250" key="2">
    <source>
        <dbReference type="UniProtKB" id="Q9IV53"/>
    </source>
</evidence>
<evidence type="ECO:0000269" key="3">
    <source>
    </source>
</evidence>
<evidence type="ECO:0000269" key="4">
    <source>
    </source>
</evidence>
<evidence type="ECO:0000269" key="5">
    <source>
    </source>
</evidence>
<evidence type="ECO:0000269" key="6">
    <source>
    </source>
</evidence>
<evidence type="ECO:0000305" key="7"/>
<keyword id="KW-1031">Host cell junction</keyword>
<keyword id="KW-1035">Host cytoplasm</keyword>
<keyword id="KW-1037">Host cytoskeleton</keyword>
<keyword id="KW-1038">Host endoplasmic reticulum</keyword>
<keyword id="KW-1043">Host membrane</keyword>
<keyword id="KW-0472">Membrane</keyword>
<keyword id="KW-1185">Reference proteome</keyword>
<keyword id="KW-0812">Transmembrane</keyword>
<keyword id="KW-1133">Transmembrane helix</keyword>
<keyword id="KW-0813">Transport</keyword>
<keyword id="KW-0916">Viral movement protein</keyword>
<dbReference type="EMBL" id="X03854">
    <property type="protein sequence ID" value="CAA27486.1"/>
    <property type="molecule type" value="Genomic_RNA"/>
</dbReference>
<dbReference type="PIR" id="A04192">
    <property type="entry name" value="WMBV4B"/>
</dbReference>
<dbReference type="RefSeq" id="NP_604488.1">
    <property type="nucleotide sequence ID" value="NC_003481.1"/>
</dbReference>
<dbReference type="GeneID" id="962678"/>
<dbReference type="KEGG" id="vg:962678"/>
<dbReference type="OrthoDB" id="20634at10239"/>
<dbReference type="Proteomes" id="UP000001667">
    <property type="component" value="Genome"/>
</dbReference>
<dbReference type="GO" id="GO:0044167">
    <property type="term" value="C:host cell endoplasmic reticulum membrane"/>
    <property type="evidence" value="ECO:0007669"/>
    <property type="project" value="UniProtKB-SubCell"/>
</dbReference>
<dbReference type="GO" id="GO:0044219">
    <property type="term" value="C:host cell plasmodesma"/>
    <property type="evidence" value="ECO:0007669"/>
    <property type="project" value="UniProtKB-SubCell"/>
</dbReference>
<dbReference type="GO" id="GO:0044163">
    <property type="term" value="C:host cytoskeleton"/>
    <property type="evidence" value="ECO:0007669"/>
    <property type="project" value="UniProtKB-SubCell"/>
</dbReference>
<dbReference type="GO" id="GO:0016020">
    <property type="term" value="C:membrane"/>
    <property type="evidence" value="ECO:0007669"/>
    <property type="project" value="UniProtKB-KW"/>
</dbReference>
<dbReference type="GO" id="GO:0046740">
    <property type="term" value="P:transport of virus in host, cell to cell"/>
    <property type="evidence" value="ECO:0007669"/>
    <property type="project" value="UniProtKB-KW"/>
</dbReference>
<dbReference type="InterPro" id="IPR001896">
    <property type="entry name" value="Plant_vir_prot"/>
</dbReference>
<dbReference type="Pfam" id="PF01307">
    <property type="entry name" value="Plant_vir_prot"/>
    <property type="match status" value="1"/>
</dbReference>
<sequence length="204" mass="22670">MKTTVGSRPNKYWPIVAGIGVVGLFAYLIFSNQKHSTESGDNIHKFANGGSYRDGSKSISYNRNHPFAYGNASSPGMLLPAMLTIIGIISYLWRTRDSVLGDSGGNNSCGEDCQGECLNGHSRRSLLCDIGXSFYHCSMAIVYISKQYTYGDWSLLLSRSELCEDLWNRGYEPRSYCGHPPLAEVPFWGISDVGRFNQCFEYSS</sequence>
<comment type="function">
    <text evidence="3 4 5">Participates in the transport of viral genome to neighboring plant cells directly through plasmodesmata, without any budding (PubMed:18353960). TGBp2 and TGBp3 are necessary for intracellular delivery of TGBp1-containing vRNPs to plasmodesmata (PubMed:19570874). Can gate plasmodesmata and increase their size exclusion limit (PubMed:19570874). To a lesser extent than TGB3, induces host actin cytoskeleton network thickening, which probably plays a major role in virus cell-to-cell movement (PubMed:25288925).</text>
</comment>
<comment type="subunit">
    <text evidence="3 6">Interacts with movement protein TGB3 (PubMed:18353960). TGB1-TGB3-TGB2 complex formation is enhanced by ATP hydrolysis (PubMed:32730331).</text>
</comment>
<comment type="subcellular location">
    <subcellularLocation>
        <location evidence="4">Host cell junction</location>
        <location evidence="4">Host plasmodesma</location>
    </subcellularLocation>
    <subcellularLocation>
        <location evidence="5">Host endoplasmic reticulum membrane</location>
        <topology evidence="2">Multi-pass membrane protein</topology>
    </subcellularLocation>
    <subcellularLocation>
        <location evidence="5">Host cytoplasm</location>
        <location evidence="5">Host cytoskeleton</location>
    </subcellularLocation>
    <text evidence="1 5 7">Probably localizes to plasmodesmata-associated membrane compartments called peripheral membrane bodies (PMBs) (Probable). Associates with host actin filaments, possibly for the intracellular transport to the plasmodesmata (PubMed:25288925). The viral replication sites are located at the host chloroplast membrane (By similarity).</text>
</comment>
<comment type="miscellaneous">
    <text>This protein is translated as a fusion protein by episodic readthrough of a termination codon. Readthrough of the terminator codon TGA occurs between the codons for Gly-131 and Ser-133, thereby producing TGB2' minor translational readthrough protein.</text>
</comment>
<comment type="miscellaneous">
    <text evidence="7">The genome of this virus consists of three linear, positive, single-stranded RNAs encapsidated in separate virions designated RNA-alpha, RNA-beta and RNA-gamma. Three proteins (alpha-A, beta-A and gamma-A) are translated directly from these genomic RNAs and the remaining proteins encoded on RNA-beta (beta-B, beta-C and beta-D) and RNA-gamma (gamma-B) are expressed via three subgenomic messenger RNAs.</text>
</comment>
<comment type="similarity">
    <text evidence="7">Belongs to the virgaviridae/benyvirus TGB2 movement protein family.</text>
</comment>
<organismHost>
    <name type="scientific">Hordeum vulgare</name>
    <name type="common">Barley</name>
    <dbReference type="NCBI Taxonomy" id="4513"/>
</organismHost>
<organismHost>
    <name type="scientific">Triticum aestivum</name>
    <name type="common">Wheat</name>
    <dbReference type="NCBI Taxonomy" id="4565"/>
</organismHost>
<reference key="1">
    <citation type="journal article" date="1986" name="Nucleic Acids Res.">
        <title>The complete nucleotide sequence of RNA beta from the type strain of barley stripe mosaic virus.</title>
        <authorList>
            <person name="Gustafson G."/>
            <person name="Armour S.L."/>
        </authorList>
    </citation>
    <scope>NUCLEOTIDE SEQUENCE [GENOMIC RNA]</scope>
    <scope>READTHROUGH</scope>
    <scope>IDENTIFICATION OF TGB2'</scope>
    <source>
        <strain>ATCC PV43</strain>
    </source>
</reference>
<reference key="2">
    <citation type="journal article" date="2008" name="J. Virol.">
        <title>Triple gene block protein interactions involved in movement of Barley stripe mosaic virus.</title>
        <authorList>
            <person name="Lim H.S."/>
            <person name="Bragg J.N."/>
            <person name="Ganesan U."/>
            <person name="Lawrence D.M."/>
            <person name="Yu J."/>
            <person name="Isogai M."/>
            <person name="Hammond J."/>
            <person name="Jackson A.O."/>
        </authorList>
    </citation>
    <scope>INTERACTION WITH MOVEMENT PROTEIN TGB3</scope>
    <scope>FUNCTION</scope>
</reference>
<reference key="3">
    <citation type="journal article" date="2009" name="J. Virol.">
        <title>Subcellular localization of the barley stripe mosaic virus triple gene block proteins.</title>
        <authorList>
            <person name="Lim H.S."/>
            <person name="Bragg J.N."/>
            <person name="Ganesan U."/>
            <person name="Ruzin S."/>
            <person name="Schichnes D."/>
            <person name="Lee M.Y."/>
            <person name="Vaira A.M."/>
            <person name="Ryu K.H."/>
            <person name="Hammond J."/>
            <person name="Jackson A.O."/>
        </authorList>
    </citation>
    <scope>SUBCELLULAR LOCATION</scope>
    <scope>FUNCTION</scope>
</reference>
<reference key="4">
    <citation type="journal article" date="2013" name="Plant Pathol. J.">
        <title>Actin Cytoskeleton and Golgi Involvement in Barley stripe mosaic virus Movement and Cell Wall Localization of Triple Gene Block Proteins.</title>
        <authorList>
            <person name="Lim H.S."/>
            <person name="Lee M.Y."/>
            <person name="Moon J.S."/>
            <person name="Moon J.K."/>
            <person name="Yu Y.M."/>
            <person name="Cho I.S."/>
            <person name="Bae H."/>
            <person name="deBoer M."/>
            <person name="Ju H."/>
            <person name="Hammond J."/>
            <person name="Jackson A.O."/>
        </authorList>
    </citation>
    <scope>FUNCTION</scope>
    <scope>SUBCELLULAR LOCATION</scope>
</reference>
<reference key="5">
    <citation type="journal article" date="2020" name="PLoS Pathog.">
        <title>The Barley stripe mosaic virus gammab protein promotes viral cell-to-cell movement by enhancing ATPase-mediated assembly of ribonucleoprotein movement complexes.</title>
        <authorList>
            <person name="Jiang Z."/>
            <person name="Zhang K."/>
            <person name="Li Z."/>
            <person name="Li Z."/>
            <person name="Yang M."/>
            <person name="Jin X."/>
            <person name="Cao Q."/>
            <person name="Wang X."/>
            <person name="Yue N."/>
            <person name="Li D."/>
            <person name="Zhang Y."/>
        </authorList>
    </citation>
    <scope>IDENTIFICATION IN THE TGB1-TGB2-TGB3 COMPLEX</scope>
</reference>
<proteinExistence type="evidence at protein level"/>
<feature type="chain" id="PRO_0000409145" description="TGB2' protein">
    <location>
        <begin position="1"/>
        <end position="204"/>
    </location>
</feature>
<feature type="chain" id="PRO_0000222489" description="Movement protein TGB2">
    <location>
        <begin position="1"/>
        <end position="131"/>
    </location>
</feature>
<feature type="topological domain" description="Cytoplasmic" evidence="2">
    <location>
        <begin position="1"/>
        <end position="11"/>
    </location>
</feature>
<feature type="transmembrane region" description="Helical" evidence="2">
    <location>
        <begin position="12"/>
        <end position="32"/>
    </location>
</feature>
<feature type="topological domain" description="Lumenal" evidence="2">
    <location>
        <begin position="33"/>
        <end position="72"/>
    </location>
</feature>
<feature type="transmembrane region" description="Helical" evidence="2">
    <location>
        <begin position="73"/>
        <end position="93"/>
    </location>
</feature>
<feature type="topological domain" description="Cytoplasmic" evidence="2">
    <location>
        <begin position="94"/>
        <end position="204"/>
    </location>
</feature>
<accession>P04869</accession>